<name>Y4034_PSEE4</name>
<dbReference type="EMBL" id="CT573326">
    <property type="protein sequence ID" value="CAK16732.1"/>
    <property type="molecule type" value="Genomic_DNA"/>
</dbReference>
<dbReference type="RefSeq" id="WP_011535104.1">
    <property type="nucleotide sequence ID" value="NC_008027.1"/>
</dbReference>
<dbReference type="SMR" id="Q1I6K3"/>
<dbReference type="STRING" id="384676.PSEEN4034"/>
<dbReference type="GeneID" id="32807051"/>
<dbReference type="KEGG" id="pen:PSEEN4034"/>
<dbReference type="eggNOG" id="COG3100">
    <property type="taxonomic scope" value="Bacteria"/>
</dbReference>
<dbReference type="HOGENOM" id="CLU_155118_2_0_6"/>
<dbReference type="OrthoDB" id="7062382at2"/>
<dbReference type="Proteomes" id="UP000000658">
    <property type="component" value="Chromosome"/>
</dbReference>
<dbReference type="Gene3D" id="3.10.510.20">
    <property type="entry name" value="YcgL domain"/>
    <property type="match status" value="1"/>
</dbReference>
<dbReference type="HAMAP" id="MF_01866">
    <property type="entry name" value="UPF0745"/>
    <property type="match status" value="1"/>
</dbReference>
<dbReference type="InterPro" id="IPR038068">
    <property type="entry name" value="YcgL-like_sf"/>
</dbReference>
<dbReference type="InterPro" id="IPR027354">
    <property type="entry name" value="YcgL_dom"/>
</dbReference>
<dbReference type="PANTHER" id="PTHR38109">
    <property type="entry name" value="PROTEIN YCGL"/>
    <property type="match status" value="1"/>
</dbReference>
<dbReference type="PANTHER" id="PTHR38109:SF1">
    <property type="entry name" value="PROTEIN YCGL"/>
    <property type="match status" value="1"/>
</dbReference>
<dbReference type="Pfam" id="PF05166">
    <property type="entry name" value="YcgL"/>
    <property type="match status" value="1"/>
</dbReference>
<dbReference type="SUPFAM" id="SSF160191">
    <property type="entry name" value="YcgL-like"/>
    <property type="match status" value="1"/>
</dbReference>
<dbReference type="PROSITE" id="PS51648">
    <property type="entry name" value="YCGL"/>
    <property type="match status" value="1"/>
</dbReference>
<gene>
    <name type="ordered locus">PSEEN4034</name>
</gene>
<evidence type="ECO:0000255" key="1">
    <source>
        <dbReference type="HAMAP-Rule" id="MF_01866"/>
    </source>
</evidence>
<reference key="1">
    <citation type="journal article" date="2006" name="Nat. Biotechnol.">
        <title>Complete genome sequence of the entomopathogenic and metabolically versatile soil bacterium Pseudomonas entomophila.</title>
        <authorList>
            <person name="Vodovar N."/>
            <person name="Vallenet D."/>
            <person name="Cruveiller S."/>
            <person name="Rouy Z."/>
            <person name="Barbe V."/>
            <person name="Acosta C."/>
            <person name="Cattolico L."/>
            <person name="Jubin C."/>
            <person name="Lajus A."/>
            <person name="Segurens B."/>
            <person name="Vacherie B."/>
            <person name="Wincker P."/>
            <person name="Weissenbach J."/>
            <person name="Lemaitre B."/>
            <person name="Medigue C."/>
            <person name="Boccard F."/>
        </authorList>
    </citation>
    <scope>NUCLEOTIDE SEQUENCE [LARGE SCALE GENOMIC DNA]</scope>
    <source>
        <strain>L48</strain>
    </source>
</reference>
<sequence>MKRICSIYKSPRKNEMYLYVLKADGLERVPEGLLPFFGTPVHAFDLVLSPERKLAREDIAKVLENLDSQGYHLQMPPPDDDYIEHLPEELLRRNDPA</sequence>
<feature type="chain" id="PRO_0000375331" description="YcgL domain-containing protein PSEEN4034">
    <location>
        <begin position="1"/>
        <end position="97"/>
    </location>
</feature>
<feature type="domain" description="YcgL" evidence="1">
    <location>
        <begin position="3"/>
        <end position="87"/>
    </location>
</feature>
<proteinExistence type="inferred from homology"/>
<organism>
    <name type="scientific">Pseudomonas entomophila (strain L48)</name>
    <dbReference type="NCBI Taxonomy" id="384676"/>
    <lineage>
        <taxon>Bacteria</taxon>
        <taxon>Pseudomonadati</taxon>
        <taxon>Pseudomonadota</taxon>
        <taxon>Gammaproteobacteria</taxon>
        <taxon>Pseudomonadales</taxon>
        <taxon>Pseudomonadaceae</taxon>
        <taxon>Pseudomonas</taxon>
    </lineage>
</organism>
<accession>Q1I6K3</accession>
<protein>
    <recommendedName>
        <fullName evidence="1">YcgL domain-containing protein PSEEN4034</fullName>
    </recommendedName>
</protein>